<comment type="catalytic activity">
    <reaction evidence="1">
        <text>2-formamido-N(1)-(5-O-phospho-beta-D-ribosyl)acetamidine + ATP = 5-amino-1-(5-phospho-beta-D-ribosyl)imidazole + ADP + phosphate + H(+)</text>
        <dbReference type="Rhea" id="RHEA:23032"/>
        <dbReference type="ChEBI" id="CHEBI:15378"/>
        <dbReference type="ChEBI" id="CHEBI:30616"/>
        <dbReference type="ChEBI" id="CHEBI:43474"/>
        <dbReference type="ChEBI" id="CHEBI:137981"/>
        <dbReference type="ChEBI" id="CHEBI:147287"/>
        <dbReference type="ChEBI" id="CHEBI:456216"/>
        <dbReference type="EC" id="6.3.3.1"/>
    </reaction>
</comment>
<comment type="pathway">
    <text evidence="1">Purine metabolism; IMP biosynthesis via de novo pathway; 5-amino-1-(5-phospho-D-ribosyl)imidazole from N(2)-formyl-N(1)-(5-phospho-D-ribosyl)glycinamide: step 2/2.</text>
</comment>
<comment type="subcellular location">
    <subcellularLocation>
        <location evidence="1">Cytoplasm</location>
    </subcellularLocation>
</comment>
<comment type="similarity">
    <text evidence="1">Belongs to the AIR synthase family.</text>
</comment>
<name>PUR5_TRIL1</name>
<keyword id="KW-0067">ATP-binding</keyword>
<keyword id="KW-0963">Cytoplasm</keyword>
<keyword id="KW-0436">Ligase</keyword>
<keyword id="KW-0547">Nucleotide-binding</keyword>
<keyword id="KW-0658">Purine biosynthesis</keyword>
<keyword id="KW-1185">Reference proteome</keyword>
<dbReference type="EC" id="6.3.3.1" evidence="1"/>
<dbReference type="EMBL" id="CP001089">
    <property type="protein sequence ID" value="ACD95822.1"/>
    <property type="molecule type" value="Genomic_DNA"/>
</dbReference>
<dbReference type="RefSeq" id="WP_012470161.1">
    <property type="nucleotide sequence ID" value="NC_010814.1"/>
</dbReference>
<dbReference type="SMR" id="B3E3K3"/>
<dbReference type="STRING" id="398767.Glov_2106"/>
<dbReference type="KEGG" id="glo:Glov_2106"/>
<dbReference type="eggNOG" id="COG0150">
    <property type="taxonomic scope" value="Bacteria"/>
</dbReference>
<dbReference type="HOGENOM" id="CLU_047116_0_0_7"/>
<dbReference type="OrthoDB" id="9777881at2"/>
<dbReference type="UniPathway" id="UPA00074">
    <property type="reaction ID" value="UER00129"/>
</dbReference>
<dbReference type="Proteomes" id="UP000002420">
    <property type="component" value="Chromosome"/>
</dbReference>
<dbReference type="GO" id="GO:0005829">
    <property type="term" value="C:cytosol"/>
    <property type="evidence" value="ECO:0007669"/>
    <property type="project" value="TreeGrafter"/>
</dbReference>
<dbReference type="GO" id="GO:0005524">
    <property type="term" value="F:ATP binding"/>
    <property type="evidence" value="ECO:0007669"/>
    <property type="project" value="UniProtKB-KW"/>
</dbReference>
<dbReference type="GO" id="GO:0004637">
    <property type="term" value="F:phosphoribosylamine-glycine ligase activity"/>
    <property type="evidence" value="ECO:0007669"/>
    <property type="project" value="TreeGrafter"/>
</dbReference>
<dbReference type="GO" id="GO:0004641">
    <property type="term" value="F:phosphoribosylformylglycinamidine cyclo-ligase activity"/>
    <property type="evidence" value="ECO:0007669"/>
    <property type="project" value="UniProtKB-UniRule"/>
</dbReference>
<dbReference type="GO" id="GO:0006189">
    <property type="term" value="P:'de novo' IMP biosynthetic process"/>
    <property type="evidence" value="ECO:0007669"/>
    <property type="project" value="UniProtKB-UniRule"/>
</dbReference>
<dbReference type="GO" id="GO:0046084">
    <property type="term" value="P:adenine biosynthetic process"/>
    <property type="evidence" value="ECO:0007669"/>
    <property type="project" value="TreeGrafter"/>
</dbReference>
<dbReference type="CDD" id="cd02196">
    <property type="entry name" value="PurM"/>
    <property type="match status" value="1"/>
</dbReference>
<dbReference type="FunFam" id="3.30.1330.10:FF:000001">
    <property type="entry name" value="Phosphoribosylformylglycinamidine cyclo-ligase"/>
    <property type="match status" value="1"/>
</dbReference>
<dbReference type="FunFam" id="3.90.650.10:FF:000001">
    <property type="entry name" value="Phosphoribosylformylglycinamidine cyclo-ligase"/>
    <property type="match status" value="1"/>
</dbReference>
<dbReference type="Gene3D" id="3.90.650.10">
    <property type="entry name" value="PurM-like C-terminal domain"/>
    <property type="match status" value="1"/>
</dbReference>
<dbReference type="Gene3D" id="3.30.1330.10">
    <property type="entry name" value="PurM-like, N-terminal domain"/>
    <property type="match status" value="1"/>
</dbReference>
<dbReference type="HAMAP" id="MF_00741">
    <property type="entry name" value="AIRS"/>
    <property type="match status" value="1"/>
</dbReference>
<dbReference type="InterPro" id="IPR010918">
    <property type="entry name" value="PurM-like_C_dom"/>
</dbReference>
<dbReference type="InterPro" id="IPR036676">
    <property type="entry name" value="PurM-like_C_sf"/>
</dbReference>
<dbReference type="InterPro" id="IPR016188">
    <property type="entry name" value="PurM-like_N"/>
</dbReference>
<dbReference type="InterPro" id="IPR036921">
    <property type="entry name" value="PurM-like_N_sf"/>
</dbReference>
<dbReference type="InterPro" id="IPR004733">
    <property type="entry name" value="PurM_cligase"/>
</dbReference>
<dbReference type="NCBIfam" id="TIGR00878">
    <property type="entry name" value="purM"/>
    <property type="match status" value="1"/>
</dbReference>
<dbReference type="PANTHER" id="PTHR10520:SF12">
    <property type="entry name" value="TRIFUNCTIONAL PURINE BIOSYNTHETIC PROTEIN ADENOSINE-3"/>
    <property type="match status" value="1"/>
</dbReference>
<dbReference type="PANTHER" id="PTHR10520">
    <property type="entry name" value="TRIFUNCTIONAL PURINE BIOSYNTHETIC PROTEIN ADENOSINE-3-RELATED"/>
    <property type="match status" value="1"/>
</dbReference>
<dbReference type="Pfam" id="PF00586">
    <property type="entry name" value="AIRS"/>
    <property type="match status" value="1"/>
</dbReference>
<dbReference type="Pfam" id="PF02769">
    <property type="entry name" value="AIRS_C"/>
    <property type="match status" value="1"/>
</dbReference>
<dbReference type="SUPFAM" id="SSF56042">
    <property type="entry name" value="PurM C-terminal domain-like"/>
    <property type="match status" value="1"/>
</dbReference>
<dbReference type="SUPFAM" id="SSF55326">
    <property type="entry name" value="PurM N-terminal domain-like"/>
    <property type="match status" value="1"/>
</dbReference>
<evidence type="ECO:0000255" key="1">
    <source>
        <dbReference type="HAMAP-Rule" id="MF_00741"/>
    </source>
</evidence>
<organism>
    <name type="scientific">Trichlorobacter lovleyi (strain ATCC BAA-1151 / DSM 17278 / SZ)</name>
    <name type="common">Geobacter lovleyi</name>
    <dbReference type="NCBI Taxonomy" id="398767"/>
    <lineage>
        <taxon>Bacteria</taxon>
        <taxon>Pseudomonadati</taxon>
        <taxon>Thermodesulfobacteriota</taxon>
        <taxon>Desulfuromonadia</taxon>
        <taxon>Geobacterales</taxon>
        <taxon>Geobacteraceae</taxon>
        <taxon>Trichlorobacter</taxon>
    </lineage>
</organism>
<protein>
    <recommendedName>
        <fullName evidence="1">Phosphoribosylformylglycinamidine cyclo-ligase</fullName>
        <ecNumber evidence="1">6.3.3.1</ecNumber>
    </recommendedName>
    <alternativeName>
        <fullName evidence="1">AIR synthase</fullName>
    </alternativeName>
    <alternativeName>
        <fullName evidence="1">AIRS</fullName>
    </alternativeName>
    <alternativeName>
        <fullName evidence="1">Phosphoribosyl-aminoimidazole synthetase</fullName>
    </alternativeName>
</protein>
<proteinExistence type="inferred from homology"/>
<reference key="1">
    <citation type="submission" date="2008-05" db="EMBL/GenBank/DDBJ databases">
        <title>Complete sequence of chromosome of Geobacter lovleyi SZ.</title>
        <authorList>
            <consortium name="US DOE Joint Genome Institute"/>
            <person name="Lucas S."/>
            <person name="Copeland A."/>
            <person name="Lapidus A."/>
            <person name="Glavina del Rio T."/>
            <person name="Dalin E."/>
            <person name="Tice H."/>
            <person name="Bruce D."/>
            <person name="Goodwin L."/>
            <person name="Pitluck S."/>
            <person name="Chertkov O."/>
            <person name="Meincke L."/>
            <person name="Brettin T."/>
            <person name="Detter J.C."/>
            <person name="Han C."/>
            <person name="Tapia R."/>
            <person name="Kuske C.R."/>
            <person name="Schmutz J."/>
            <person name="Larimer F."/>
            <person name="Land M."/>
            <person name="Hauser L."/>
            <person name="Kyrpides N."/>
            <person name="Mikhailova N."/>
            <person name="Sung Y."/>
            <person name="Fletcher K.E."/>
            <person name="Ritalahti K.M."/>
            <person name="Loeffler F.E."/>
            <person name="Richardson P."/>
        </authorList>
    </citation>
    <scope>NUCLEOTIDE SEQUENCE [LARGE SCALE GENOMIC DNA]</scope>
    <source>
        <strain>ATCC BAA-1151 / DSM 17278 / SZ</strain>
    </source>
</reference>
<accession>B3E3K3</accession>
<sequence>MSKPRATYKEAGVDIEAGNSFVQKIKPLVKSTFRPEVMTEIGGFGGLFSLNAAKYKNPVLVSGTDGVGTKLKLAFLADRHDTVGIDLVAMCVNDIVVQGAEPLFFLDYLATGKLDPDKAAQIVAGIAEGCRQAGCALIGGETAEMPGFYADGEYDIAGFTVGVVEKDQIIDGSSITVGNKLIGIGSSGLHSNGYSLARRIIFDRMGLAINSPLPDSTKTVDEELLTPTRIYVRSVMNLLKDFRINGIAHITGGGLLENVPRILPKGCSASFKLGSWDMPSIFTTLQEAGNVEQNEMYRTFNMGIGMVLAVAAADVDDILSRLNGLGEQAWLIGEVKSMSKNQTEQVVLV</sequence>
<feature type="chain" id="PRO_1000193027" description="Phosphoribosylformylglycinamidine cyclo-ligase">
    <location>
        <begin position="1"/>
        <end position="349"/>
    </location>
</feature>
<gene>
    <name evidence="1" type="primary">purM</name>
    <name type="ordered locus">Glov_2106</name>
</gene>